<name>OAT1_STAAR</name>
<organism>
    <name type="scientific">Staphylococcus aureus (strain MRSA252)</name>
    <dbReference type="NCBI Taxonomy" id="282458"/>
    <lineage>
        <taxon>Bacteria</taxon>
        <taxon>Bacillati</taxon>
        <taxon>Bacillota</taxon>
        <taxon>Bacilli</taxon>
        <taxon>Bacillales</taxon>
        <taxon>Staphylococcaceae</taxon>
        <taxon>Staphylococcus</taxon>
    </lineage>
</organism>
<accession>Q6GKC1</accession>
<sequence>MNSIIELTDYYSSNNYAPLKLVITEGKGGKVWDTDGKQYIDCISGFSVANQGHCHPTIVKAMTEQASKLSIISRVLYSDNLGKWEEKICHLAKKDKVLPLNSGTEAVEAAIKIARKWGSDVKGITDGQVEIIAMNNNFHGRTLGSLSLSNHDAYKSGFHPLLQGTKTVDFGDIEQLTQAISPNTAAIILEPIQGEGGVNIPPKGYIQAVRQLCDKHQILLIADEIQVGLGRTGKWFAMEWEQVVPDIYILGKALGGGLYPVSAVLANNDVMRVLTPGTHGSTFGGNPLAIAISTAALDVLKDEQLVERSERLGSFLLKALLQLKHPSIKEIRGRGLFIGIELNTDAAPFVEQLIKRGILCKDTHRTIIRLSPPLVIDKEEINQIVAAFQDVFKN</sequence>
<comment type="function">
    <text evidence="1">Catalyzes the interconversion of ornithine to glutamate semialdehyde.</text>
</comment>
<comment type="catalytic activity">
    <reaction evidence="1">
        <text>a 2-oxocarboxylate + L-ornithine = L-glutamate 5-semialdehyde + an L-alpha-amino acid</text>
        <dbReference type="Rhea" id="RHEA:13877"/>
        <dbReference type="ChEBI" id="CHEBI:35179"/>
        <dbReference type="ChEBI" id="CHEBI:46911"/>
        <dbReference type="ChEBI" id="CHEBI:58066"/>
        <dbReference type="ChEBI" id="CHEBI:59869"/>
        <dbReference type="EC" id="2.6.1.13"/>
    </reaction>
</comment>
<comment type="cofactor">
    <cofactor evidence="1">
        <name>pyridoxal 5'-phosphate</name>
        <dbReference type="ChEBI" id="CHEBI:597326"/>
    </cofactor>
</comment>
<comment type="pathway">
    <text evidence="1">Amino-acid biosynthesis; L-proline biosynthesis; L-glutamate 5-semialdehyde from L-ornithine: step 1/1.</text>
</comment>
<comment type="subcellular location">
    <subcellularLocation>
        <location evidence="1">Cytoplasm</location>
    </subcellularLocation>
</comment>
<comment type="similarity">
    <text evidence="1">Belongs to the class-III pyridoxal-phosphate-dependent aminotransferase family. OAT subfamily.</text>
</comment>
<keyword id="KW-0028">Amino-acid biosynthesis</keyword>
<keyword id="KW-0032">Aminotransferase</keyword>
<keyword id="KW-0963">Cytoplasm</keyword>
<keyword id="KW-0641">Proline biosynthesis</keyword>
<keyword id="KW-0663">Pyridoxal phosphate</keyword>
<keyword id="KW-0808">Transferase</keyword>
<dbReference type="EC" id="2.6.1.13" evidence="1"/>
<dbReference type="EMBL" id="BX571856">
    <property type="protein sequence ID" value="CAG39213.1"/>
    <property type="molecule type" value="Genomic_DNA"/>
</dbReference>
<dbReference type="SMR" id="Q6GKC1"/>
<dbReference type="KEGG" id="sar:SAR0186"/>
<dbReference type="HOGENOM" id="CLU_016922_10_1_9"/>
<dbReference type="UniPathway" id="UPA00098">
    <property type="reaction ID" value="UER00358"/>
</dbReference>
<dbReference type="Proteomes" id="UP000000596">
    <property type="component" value="Chromosome"/>
</dbReference>
<dbReference type="GO" id="GO:0005737">
    <property type="term" value="C:cytoplasm"/>
    <property type="evidence" value="ECO:0007669"/>
    <property type="project" value="UniProtKB-SubCell"/>
</dbReference>
<dbReference type="GO" id="GO:0042802">
    <property type="term" value="F:identical protein binding"/>
    <property type="evidence" value="ECO:0007669"/>
    <property type="project" value="TreeGrafter"/>
</dbReference>
<dbReference type="GO" id="GO:0004587">
    <property type="term" value="F:ornithine aminotransferase activity"/>
    <property type="evidence" value="ECO:0007669"/>
    <property type="project" value="UniProtKB-UniRule"/>
</dbReference>
<dbReference type="GO" id="GO:0030170">
    <property type="term" value="F:pyridoxal phosphate binding"/>
    <property type="evidence" value="ECO:0007669"/>
    <property type="project" value="UniProtKB-UniRule"/>
</dbReference>
<dbReference type="GO" id="GO:0006525">
    <property type="term" value="P:arginine metabolic process"/>
    <property type="evidence" value="ECO:0007669"/>
    <property type="project" value="InterPro"/>
</dbReference>
<dbReference type="GO" id="GO:0055129">
    <property type="term" value="P:L-proline biosynthetic process"/>
    <property type="evidence" value="ECO:0007669"/>
    <property type="project" value="UniProtKB-UniRule"/>
</dbReference>
<dbReference type="CDD" id="cd00610">
    <property type="entry name" value="OAT_like"/>
    <property type="match status" value="1"/>
</dbReference>
<dbReference type="FunFam" id="3.40.640.10:FF:000011">
    <property type="entry name" value="Ornithine aminotransferase"/>
    <property type="match status" value="1"/>
</dbReference>
<dbReference type="Gene3D" id="3.90.1150.10">
    <property type="entry name" value="Aspartate Aminotransferase, domain 1"/>
    <property type="match status" value="1"/>
</dbReference>
<dbReference type="Gene3D" id="3.40.640.10">
    <property type="entry name" value="Type I PLP-dependent aspartate aminotransferase-like (Major domain)"/>
    <property type="match status" value="1"/>
</dbReference>
<dbReference type="HAMAP" id="MF_01689">
    <property type="entry name" value="Ornith_aminotrans_3"/>
    <property type="match status" value="1"/>
</dbReference>
<dbReference type="InterPro" id="IPR004636">
    <property type="entry name" value="AcOrn/SuccOrn_fam"/>
</dbReference>
<dbReference type="InterPro" id="IPR005814">
    <property type="entry name" value="Aminotrans_3"/>
</dbReference>
<dbReference type="InterPro" id="IPR049704">
    <property type="entry name" value="Aminotrans_3_PPA_site"/>
</dbReference>
<dbReference type="InterPro" id="IPR050103">
    <property type="entry name" value="Class-III_PLP-dep_AT"/>
</dbReference>
<dbReference type="InterPro" id="IPR010164">
    <property type="entry name" value="Orn_aminotrans"/>
</dbReference>
<dbReference type="InterPro" id="IPR034757">
    <property type="entry name" value="Ornith_aminotrans_bact"/>
</dbReference>
<dbReference type="InterPro" id="IPR015424">
    <property type="entry name" value="PyrdxlP-dep_Trfase"/>
</dbReference>
<dbReference type="InterPro" id="IPR015421">
    <property type="entry name" value="PyrdxlP-dep_Trfase_major"/>
</dbReference>
<dbReference type="InterPro" id="IPR015422">
    <property type="entry name" value="PyrdxlP-dep_Trfase_small"/>
</dbReference>
<dbReference type="NCBIfam" id="TIGR00707">
    <property type="entry name" value="argD"/>
    <property type="match status" value="1"/>
</dbReference>
<dbReference type="NCBIfam" id="TIGR01885">
    <property type="entry name" value="Orn_aminotrans"/>
    <property type="match status" value="1"/>
</dbReference>
<dbReference type="NCBIfam" id="NF002325">
    <property type="entry name" value="PRK01278.1"/>
    <property type="match status" value="1"/>
</dbReference>
<dbReference type="PANTHER" id="PTHR11986">
    <property type="entry name" value="AMINOTRANSFERASE CLASS III"/>
    <property type="match status" value="1"/>
</dbReference>
<dbReference type="PANTHER" id="PTHR11986:SF18">
    <property type="entry name" value="ORNITHINE AMINOTRANSFERASE, MITOCHONDRIAL"/>
    <property type="match status" value="1"/>
</dbReference>
<dbReference type="Pfam" id="PF00202">
    <property type="entry name" value="Aminotran_3"/>
    <property type="match status" value="1"/>
</dbReference>
<dbReference type="PIRSF" id="PIRSF000521">
    <property type="entry name" value="Transaminase_4ab_Lys_Orn"/>
    <property type="match status" value="1"/>
</dbReference>
<dbReference type="SUPFAM" id="SSF53383">
    <property type="entry name" value="PLP-dependent transferases"/>
    <property type="match status" value="1"/>
</dbReference>
<dbReference type="PROSITE" id="PS00600">
    <property type="entry name" value="AA_TRANSFER_CLASS_3"/>
    <property type="match status" value="1"/>
</dbReference>
<protein>
    <recommendedName>
        <fullName evidence="1">Ornithine aminotransferase 1</fullName>
        <shortName evidence="1">OAT 1</shortName>
        <ecNumber evidence="1">2.6.1.13</ecNumber>
    </recommendedName>
    <alternativeName>
        <fullName evidence="1">Ornithine--oxo-acid aminotransferase 1</fullName>
    </alternativeName>
</protein>
<reference key="1">
    <citation type="journal article" date="2004" name="Proc. Natl. Acad. Sci. U.S.A.">
        <title>Complete genomes of two clinical Staphylococcus aureus strains: evidence for the rapid evolution of virulence and drug resistance.</title>
        <authorList>
            <person name="Holden M.T.G."/>
            <person name="Feil E.J."/>
            <person name="Lindsay J.A."/>
            <person name="Peacock S.J."/>
            <person name="Day N.P.J."/>
            <person name="Enright M.C."/>
            <person name="Foster T.J."/>
            <person name="Moore C.E."/>
            <person name="Hurst L."/>
            <person name="Atkin R."/>
            <person name="Barron A."/>
            <person name="Bason N."/>
            <person name="Bentley S.D."/>
            <person name="Chillingworth C."/>
            <person name="Chillingworth T."/>
            <person name="Churcher C."/>
            <person name="Clark L."/>
            <person name="Corton C."/>
            <person name="Cronin A."/>
            <person name="Doggett J."/>
            <person name="Dowd L."/>
            <person name="Feltwell T."/>
            <person name="Hance Z."/>
            <person name="Harris B."/>
            <person name="Hauser H."/>
            <person name="Holroyd S."/>
            <person name="Jagels K."/>
            <person name="James K.D."/>
            <person name="Lennard N."/>
            <person name="Line A."/>
            <person name="Mayes R."/>
            <person name="Moule S."/>
            <person name="Mungall K."/>
            <person name="Ormond D."/>
            <person name="Quail M.A."/>
            <person name="Rabbinowitsch E."/>
            <person name="Rutherford K.M."/>
            <person name="Sanders M."/>
            <person name="Sharp S."/>
            <person name="Simmonds M."/>
            <person name="Stevens K."/>
            <person name="Whitehead S."/>
            <person name="Barrell B.G."/>
            <person name="Spratt B.G."/>
            <person name="Parkhill J."/>
        </authorList>
    </citation>
    <scope>NUCLEOTIDE SEQUENCE [LARGE SCALE GENOMIC DNA]</scope>
    <source>
        <strain>MRSA252</strain>
    </source>
</reference>
<feature type="chain" id="PRO_0000112786" description="Ornithine aminotransferase 1">
    <location>
        <begin position="1"/>
        <end position="394"/>
    </location>
</feature>
<feature type="modified residue" description="N6-(pyridoxal phosphate)lysine" evidence="1">
    <location>
        <position position="252"/>
    </location>
</feature>
<gene>
    <name evidence="1" type="primary">rocD1</name>
    <name type="ordered locus">SAR0186</name>
</gene>
<evidence type="ECO:0000255" key="1">
    <source>
        <dbReference type="HAMAP-Rule" id="MF_01689"/>
    </source>
</evidence>
<proteinExistence type="inferred from homology"/>